<organism>
    <name type="scientific">Rattus norvegicus</name>
    <name type="common">Rat</name>
    <dbReference type="NCBI Taxonomy" id="10116"/>
    <lineage>
        <taxon>Eukaryota</taxon>
        <taxon>Metazoa</taxon>
        <taxon>Chordata</taxon>
        <taxon>Craniata</taxon>
        <taxon>Vertebrata</taxon>
        <taxon>Euteleostomi</taxon>
        <taxon>Mammalia</taxon>
        <taxon>Eutheria</taxon>
        <taxon>Euarchontoglires</taxon>
        <taxon>Glires</taxon>
        <taxon>Rodentia</taxon>
        <taxon>Myomorpha</taxon>
        <taxon>Muroidea</taxon>
        <taxon>Muridae</taxon>
        <taxon>Murinae</taxon>
        <taxon>Rattus</taxon>
    </lineage>
</organism>
<name>EHD1_RAT</name>
<sequence length="534" mass="60603">MFSWVSKDARRKKEPELFQTVAEGLRQLYAQKLLPLEEHYRFHEFHSPALEDADFDNKPMVLLVGQYSTGKTTFIRHLIEQDFPGMRIGPEPTTDSFIAVMHGPTEGVVPGNALVVDPRRPFRKLNAFGNAFLNRFMCAQLPNPVLDSISIIDTPGILSGEKQRISRGYDFAAVLEWFAERVDRIILLFDAHKLDISDEFSEVIKALKNHEDKIRVVLNKADQIETQQLMRVYGALMWSLGKIINTPEVVRVYIGSFWSHPLLIPDNRKLFEAEEQDLFKDIQSLPRNAALRKLNDLIKRARLAKVHAYIISSLKKEMPNVFGKESKKKELVNNLGEIYQKIEREHQISSGDFPSLRKMQELLQTQDFSKFQALKPKLLDTVDDMLANDIARLMVMVRQEESLMPSQAVKGGAFDGTMNGPFGHGYGEGAGEGIDDVEWVVGKDKPTYDEIFYTLSPVNGKITGANAKKEMVKSKLPNTVLGKIWKLADVDKDGLLDDEEFALANHLIKVKLEGHELPADLPPHLIPPSKRRHE</sequence>
<reference key="1">
    <citation type="journal article" date="2004" name="Genome Res.">
        <title>The status, quality, and expansion of the NIH full-length cDNA project: the Mammalian Gene Collection (MGC).</title>
        <authorList>
            <consortium name="The MGC Project Team"/>
        </authorList>
    </citation>
    <scope>NUCLEOTIDE SEQUENCE [LARGE SCALE MRNA]</scope>
    <source>
        <strain>Brown Norway</strain>
        <tissue>Kidney</tissue>
        <tissue>Testis</tissue>
    </source>
</reference>
<reference key="2">
    <citation type="journal article" date="2005" name="Mol. Biol. Cell">
        <title>EHD proteins associate with syndapin I and II and such interactions play a crucial role in endosomal recycling.</title>
        <authorList>
            <person name="Braun A."/>
            <person name="Pinyol R."/>
            <person name="Dahlhaus R."/>
            <person name="Koch D."/>
            <person name="Fonarev P."/>
            <person name="Grant B.D."/>
            <person name="Kessels M.M."/>
            <person name="Qualmann B."/>
        </authorList>
    </citation>
    <scope>INTERACTION WITH PACSIN1 AND PACSIN2</scope>
</reference>
<reference key="3">
    <citation type="submission" date="2009-01" db="UniProtKB">
        <authorList>
            <person name="Maurya D.K."/>
            <person name="Bhargava P."/>
        </authorList>
    </citation>
    <scope>IDENTIFICATION BY MASS SPECTROMETRY</scope>
</reference>
<reference key="4">
    <citation type="journal article" date="2012" name="Nat. Commun.">
        <title>Quantitative maps of protein phosphorylation sites across 14 different rat organs and tissues.</title>
        <authorList>
            <person name="Lundby A."/>
            <person name="Secher A."/>
            <person name="Lage K."/>
            <person name="Nordsborg N.B."/>
            <person name="Dmytriyev A."/>
            <person name="Lundby C."/>
            <person name="Olsen J.V."/>
        </authorList>
    </citation>
    <scope>PHOSPHORYLATION [LARGE SCALE ANALYSIS] AT SER-456</scope>
    <scope>IDENTIFICATION BY MASS SPECTROMETRY [LARGE SCALE ANALYSIS]</scope>
</reference>
<reference key="5">
    <citation type="journal article" date="2013" name="J. Cell Sci.">
        <title>Rab35 establishes the EHD1-association site by coordinating two distinct effectors during neurite outgrowth.</title>
        <authorList>
            <person name="Kobayashi H."/>
            <person name="Fukuda M."/>
        </authorList>
    </citation>
    <scope>FUNCTION IN NEURITE OUTGROWTH</scope>
    <scope>SUBCELLULAR LOCATION</scope>
    <scope>INTERACTION WITH MICALL1 AND RAB35</scope>
</reference>
<comment type="function">
    <text evidence="2 3 9">ATP- and membrane-binding protein that controls membrane reorganization/tubulation upon ATP hydrolysis. In vitro causes vesiculation of endocytic membranes (By similarity). Acts in early endocytic membrane fusion and membrane trafficking of recycling endosomes (By similarity). Recruited to endosomal membranes upon nerve growth factor stimulation, indirectly regulates neurite outgrowth (PubMed:23572513). Plays a role in myoblast fusion (By similarity). Involved in the unidirectional retrograde dendritic transport of endocytosed BACE1 and in efficient sorting of BACE1 to axons implicating a function in neuronal APP processing (By similarity). Plays a role in the formation of the ciliary vesicle (CV), an early step in cilium biogenesis. Proposed to be required for the fusion of distal appendage vesicles (DAVs) to form the CV by recruiting SNARE complex component SNAP29. Is required for recruitment of transition zone proteins CEP290, RPGRIP1L, TMEM67 and B9D2, and of IFT20 following DAV reorganization before Rab8-dependent ciliary membrane extension. Required for the loss of CCP110 form the mother centriole essential for the maturation of the basal body during ciliogenesis (By similarity).</text>
</comment>
<comment type="subunit">
    <text evidence="2 3 8 9">Homooligomer, and heterooligomer with EHD2, EHD3 and EHD4, ATP-binding is required for heterooligomerization (By similarity). Interacts (via EH domain) with MICALL1 (via NPF1 motif); the interaction is direct and recruits EHD1 to membranes (PubMed:23572513). Interacts with RAB35; the interaction is indirect through MICALL1 and recruits EHD1 to membranes (PubMed:23572513). Interacts (via EH domain) with PACSIN2 (via NPF motifs); regulates localization to tubular recycling endosome membranes (PubMed:15930129). Interacts with PACSIN1 (PubMed:15930129). Interacts with RAB8A (By similarity). Interacts with FER1L5 (via second C2 domain) (By similarity). Interacts with MYOF (By similarity). Interacts with ZFYVE20 (By similarity). Interacts (via EH domain) with RAB11FIP2 (By similarity).</text>
</comment>
<comment type="interaction">
    <interactant intactId="EBI-492911">
        <id>Q641Z6</id>
    </interactant>
    <interactant intactId="EBI-491201">
        <id>Q9QY17</id>
        <label>Pacsin2</label>
    </interactant>
    <organismsDiffer>false</organismsDiffer>
    <experiments>2</experiments>
</comment>
<comment type="interaction">
    <interactant intactId="EBI-492911">
        <id>Q641Z6</id>
    </interactant>
    <interactant intactId="EBI-492883">
        <id>Q9Z2P6</id>
        <label>Snap29</label>
    </interactant>
    <organismsDiffer>false</organismsDiffer>
    <experiments>2</experiments>
</comment>
<comment type="subcellular location">
    <subcellularLocation>
        <location evidence="9">Recycling endosome membrane</location>
        <topology evidence="9">Peripheral membrane protein</topology>
        <orientation evidence="10">Cytoplasmic side</orientation>
    </subcellularLocation>
    <subcellularLocation>
        <location evidence="2">Early endosome membrane</location>
        <topology evidence="10">Peripheral membrane protein</topology>
        <orientation evidence="10">Cytoplasmic side</orientation>
    </subcellularLocation>
    <subcellularLocation>
        <location evidence="2">Cell membrane</location>
        <topology evidence="10">Peripheral membrane protein</topology>
        <orientation evidence="10">Cytoplasmic side</orientation>
    </subcellularLocation>
    <subcellularLocation>
        <location evidence="2">Cell projection</location>
        <location evidence="2">Cilium membrane</location>
        <topology evidence="10">Peripheral membrane protein</topology>
        <orientation evidence="10">Cytoplasmic side</orientation>
    </subcellularLocation>
    <text evidence="2 3">Preferentially associates with tubular recycling endosomes (By similarity). Colocalizes with FER1L5 at plasma membrane in myoblasts and myotubes (By similarity). Localizes to the ciliary pocket from where the cilium protrudes (By similarity). Colocalizes with BACE1 in tubulovesicular cytoplasmic membranes. Colocalizes with BACE1 and APP amyloid beta proteins in hippocampal mossy fiber terminals (By similarity).</text>
</comment>
<comment type="domain">
    <text evidence="3">The EH domain interacts with Asn-Pro-Phe (NPF) motifs of target proteins.</text>
</comment>
<comment type="similarity">
    <text evidence="7">Belongs to the TRAFAC class dynamin-like GTPase superfamily. Dynamin/Fzo/YdjA family. EHD subfamily.</text>
</comment>
<comment type="sequence caution" evidence="10">
    <conflict type="erroneous initiation">
        <sequence resource="EMBL-CDS" id="AAI60908"/>
    </conflict>
    <text>Extended N-terminus.</text>
</comment>
<protein>
    <recommendedName>
        <fullName evidence="10">EH domain-containing protein 1</fullName>
    </recommendedName>
</protein>
<keyword id="KW-0007">Acetylation</keyword>
<keyword id="KW-0067">ATP-binding</keyword>
<keyword id="KW-0106">Calcium</keyword>
<keyword id="KW-1003">Cell membrane</keyword>
<keyword id="KW-0966">Cell projection</keyword>
<keyword id="KW-0969">Cilium</keyword>
<keyword id="KW-0970">Cilium biogenesis/degradation</keyword>
<keyword id="KW-0175">Coiled coil</keyword>
<keyword id="KW-0967">Endosome</keyword>
<keyword id="KW-0472">Membrane</keyword>
<keyword id="KW-0479">Metal-binding</keyword>
<keyword id="KW-0547">Nucleotide-binding</keyword>
<keyword id="KW-0597">Phosphoprotein</keyword>
<keyword id="KW-0653">Protein transport</keyword>
<keyword id="KW-1185">Reference proteome</keyword>
<keyword id="KW-0813">Transport</keyword>
<evidence type="ECO:0000250" key="1">
    <source>
        <dbReference type="UniProtKB" id="Q8BH64"/>
    </source>
</evidence>
<evidence type="ECO:0000250" key="2">
    <source>
        <dbReference type="UniProtKB" id="Q9H4M9"/>
    </source>
</evidence>
<evidence type="ECO:0000250" key="3">
    <source>
        <dbReference type="UniProtKB" id="Q9WVK4"/>
    </source>
</evidence>
<evidence type="ECO:0000255" key="4"/>
<evidence type="ECO:0000255" key="5">
    <source>
        <dbReference type="PROSITE-ProRule" id="PRU00077"/>
    </source>
</evidence>
<evidence type="ECO:0000255" key="6">
    <source>
        <dbReference type="PROSITE-ProRule" id="PRU00448"/>
    </source>
</evidence>
<evidence type="ECO:0000255" key="7">
    <source>
        <dbReference type="PROSITE-ProRule" id="PRU01055"/>
    </source>
</evidence>
<evidence type="ECO:0000269" key="8">
    <source>
    </source>
</evidence>
<evidence type="ECO:0000269" key="9">
    <source>
    </source>
</evidence>
<evidence type="ECO:0000305" key="10"/>
<evidence type="ECO:0000312" key="11">
    <source>
        <dbReference type="RGD" id="1309017"/>
    </source>
</evidence>
<evidence type="ECO:0007744" key="12">
    <source>
    </source>
</evidence>
<dbReference type="EMBL" id="BC082030">
    <property type="protein sequence ID" value="AAH82030.1"/>
    <property type="molecule type" value="mRNA"/>
</dbReference>
<dbReference type="EMBL" id="BC160908">
    <property type="protein sequence ID" value="AAI60908.1"/>
    <property type="status" value="ALT_INIT"/>
    <property type="molecule type" value="mRNA"/>
</dbReference>
<dbReference type="RefSeq" id="NP_001011939.1">
    <property type="nucleotide sequence ID" value="NM_001011939.2"/>
</dbReference>
<dbReference type="BMRB" id="Q641Z6"/>
<dbReference type="SMR" id="Q641Z6"/>
<dbReference type="BioGRID" id="254403">
    <property type="interactions" value="4"/>
</dbReference>
<dbReference type="FunCoup" id="Q641Z6">
    <property type="interactions" value="2678"/>
</dbReference>
<dbReference type="IntAct" id="Q641Z6">
    <property type="interactions" value="2"/>
</dbReference>
<dbReference type="STRING" id="10116.ENSRNOP00000051714"/>
<dbReference type="iPTMnet" id="Q641Z6"/>
<dbReference type="PhosphoSitePlus" id="Q641Z6"/>
<dbReference type="SwissPalm" id="Q641Z6"/>
<dbReference type="jPOST" id="Q641Z6"/>
<dbReference type="PaxDb" id="10116-ENSRNOP00000051714"/>
<dbReference type="Ensembl" id="ENSRNOT00000054830.3">
    <property type="protein sequence ID" value="ENSRNOP00000051714.2"/>
    <property type="gene ID" value="ENSRNOG00000043503.3"/>
</dbReference>
<dbReference type="GeneID" id="293692"/>
<dbReference type="KEGG" id="rno:293692"/>
<dbReference type="UCSC" id="RGD:1309017">
    <property type="organism name" value="rat"/>
</dbReference>
<dbReference type="AGR" id="RGD:1309017"/>
<dbReference type="CTD" id="10938"/>
<dbReference type="RGD" id="1309017">
    <property type="gene designation" value="Ehd1"/>
</dbReference>
<dbReference type="eggNOG" id="KOG1954">
    <property type="taxonomic scope" value="Eukaryota"/>
</dbReference>
<dbReference type="GeneTree" id="ENSGT00940000158249"/>
<dbReference type="HOGENOM" id="CLU_017595_1_1_1"/>
<dbReference type="InParanoid" id="Q641Z6"/>
<dbReference type="OMA" id="MRVYIGY"/>
<dbReference type="OrthoDB" id="1716625at2759"/>
<dbReference type="PhylomeDB" id="Q641Z6"/>
<dbReference type="TreeFam" id="TF314429"/>
<dbReference type="Reactome" id="R-RNO-983231">
    <property type="pathway name" value="Factors involved in megakaryocyte development and platelet production"/>
</dbReference>
<dbReference type="PRO" id="PR:Q641Z6"/>
<dbReference type="Proteomes" id="UP000002494">
    <property type="component" value="Chromosome 1"/>
</dbReference>
<dbReference type="Bgee" id="ENSRNOG00000043503">
    <property type="expression patterns" value="Expressed in heart and 19 other cell types or tissues"/>
</dbReference>
<dbReference type="GO" id="GO:0020018">
    <property type="term" value="C:ciliary pocket membrane"/>
    <property type="evidence" value="ECO:0000250"/>
    <property type="project" value="UniProtKB"/>
</dbReference>
<dbReference type="GO" id="GO:0005929">
    <property type="term" value="C:cilium"/>
    <property type="evidence" value="ECO:0000250"/>
    <property type="project" value="UniProtKB"/>
</dbReference>
<dbReference type="GO" id="GO:0005737">
    <property type="term" value="C:cytoplasm"/>
    <property type="evidence" value="ECO:0000318"/>
    <property type="project" value="GO_Central"/>
</dbReference>
<dbReference type="GO" id="GO:0005769">
    <property type="term" value="C:early endosome"/>
    <property type="evidence" value="ECO:0000266"/>
    <property type="project" value="RGD"/>
</dbReference>
<dbReference type="GO" id="GO:0031901">
    <property type="term" value="C:early endosome membrane"/>
    <property type="evidence" value="ECO:0000250"/>
    <property type="project" value="UniProtKB"/>
</dbReference>
<dbReference type="GO" id="GO:0030139">
    <property type="term" value="C:endocytic vesicle"/>
    <property type="evidence" value="ECO:0000266"/>
    <property type="project" value="RGD"/>
</dbReference>
<dbReference type="GO" id="GO:0005768">
    <property type="term" value="C:endosome"/>
    <property type="evidence" value="ECO:0000266"/>
    <property type="project" value="RGD"/>
</dbReference>
<dbReference type="GO" id="GO:0010008">
    <property type="term" value="C:endosome membrane"/>
    <property type="evidence" value="ECO:0000314"/>
    <property type="project" value="UniProtKB"/>
</dbReference>
<dbReference type="GO" id="GO:0098978">
    <property type="term" value="C:glutamatergic synapse"/>
    <property type="evidence" value="ECO:0000314"/>
    <property type="project" value="SynGO"/>
</dbReference>
<dbReference type="GO" id="GO:0005811">
    <property type="term" value="C:lipid droplet"/>
    <property type="evidence" value="ECO:0000266"/>
    <property type="project" value="RGD"/>
</dbReference>
<dbReference type="GO" id="GO:0048471">
    <property type="term" value="C:perinuclear region of cytoplasm"/>
    <property type="evidence" value="ECO:0000266"/>
    <property type="project" value="RGD"/>
</dbReference>
<dbReference type="GO" id="GO:0005886">
    <property type="term" value="C:plasma membrane"/>
    <property type="evidence" value="ECO:0000250"/>
    <property type="project" value="UniProtKB"/>
</dbReference>
<dbReference type="GO" id="GO:0031095">
    <property type="term" value="C:platelet dense tubular network membrane"/>
    <property type="evidence" value="ECO:0000266"/>
    <property type="project" value="RGD"/>
</dbReference>
<dbReference type="GO" id="GO:0048786">
    <property type="term" value="C:presynaptic active zone"/>
    <property type="evidence" value="ECO:0000314"/>
    <property type="project" value="SynGO"/>
</dbReference>
<dbReference type="GO" id="GO:0055038">
    <property type="term" value="C:recycling endosome membrane"/>
    <property type="evidence" value="ECO:0000250"/>
    <property type="project" value="UniProtKB"/>
</dbReference>
<dbReference type="GO" id="GO:0005524">
    <property type="term" value="F:ATP binding"/>
    <property type="evidence" value="ECO:0007669"/>
    <property type="project" value="UniProtKB-KW"/>
</dbReference>
<dbReference type="GO" id="GO:0005509">
    <property type="term" value="F:calcium ion binding"/>
    <property type="evidence" value="ECO:0007669"/>
    <property type="project" value="InterPro"/>
</dbReference>
<dbReference type="GO" id="GO:0005525">
    <property type="term" value="F:GTP binding"/>
    <property type="evidence" value="ECO:0007669"/>
    <property type="project" value="InterPro"/>
</dbReference>
<dbReference type="GO" id="GO:0042802">
    <property type="term" value="F:identical protein binding"/>
    <property type="evidence" value="ECO:0000266"/>
    <property type="project" value="RGD"/>
</dbReference>
<dbReference type="GO" id="GO:0031267">
    <property type="term" value="F:small GTPase binding"/>
    <property type="evidence" value="ECO:0000266"/>
    <property type="project" value="RGD"/>
</dbReference>
<dbReference type="GO" id="GO:1990090">
    <property type="term" value="P:cellular response to nerve growth factor stimulus"/>
    <property type="evidence" value="ECO:0000314"/>
    <property type="project" value="UniProtKB"/>
</dbReference>
<dbReference type="GO" id="GO:0042632">
    <property type="term" value="P:cholesterol homeostasis"/>
    <property type="evidence" value="ECO:0000266"/>
    <property type="project" value="RGD"/>
</dbReference>
<dbReference type="GO" id="GO:0060271">
    <property type="term" value="P:cilium assembly"/>
    <property type="evidence" value="ECO:0000250"/>
    <property type="project" value="UniProtKB"/>
</dbReference>
<dbReference type="GO" id="GO:0032456">
    <property type="term" value="P:endocytic recycling"/>
    <property type="evidence" value="ECO:0000250"/>
    <property type="project" value="UniProtKB"/>
</dbReference>
<dbReference type="GO" id="GO:0006897">
    <property type="term" value="P:endocytosis"/>
    <property type="evidence" value="ECO:0000250"/>
    <property type="project" value="UniProtKB"/>
</dbReference>
<dbReference type="GO" id="GO:0016197">
    <property type="term" value="P:endosomal transport"/>
    <property type="evidence" value="ECO:0000266"/>
    <property type="project" value="RGD"/>
</dbReference>
<dbReference type="GO" id="GO:0006886">
    <property type="term" value="P:intracellular protein transport"/>
    <property type="evidence" value="ECO:0000250"/>
    <property type="project" value="UniProtKB"/>
</dbReference>
<dbReference type="GO" id="GO:0034383">
    <property type="term" value="P:low-density lipoprotein particle clearance"/>
    <property type="evidence" value="ECO:0000266"/>
    <property type="project" value="RGD"/>
</dbReference>
<dbReference type="GO" id="GO:0031175">
    <property type="term" value="P:neuron projection development"/>
    <property type="evidence" value="ECO:0000315"/>
    <property type="project" value="UniProtKB"/>
</dbReference>
<dbReference type="GO" id="GO:0010886">
    <property type="term" value="P:positive regulation of cholesterol storage"/>
    <property type="evidence" value="ECO:0000266"/>
    <property type="project" value="RGD"/>
</dbReference>
<dbReference type="GO" id="GO:2001137">
    <property type="term" value="P:positive regulation of endocytic recycling"/>
    <property type="evidence" value="ECO:0000250"/>
    <property type="project" value="UniProtKB"/>
</dbReference>
<dbReference type="GO" id="GO:1901741">
    <property type="term" value="P:positive regulation of myoblast fusion"/>
    <property type="evidence" value="ECO:0000250"/>
    <property type="project" value="UniProtKB"/>
</dbReference>
<dbReference type="GO" id="GO:0010976">
    <property type="term" value="P:positive regulation of neuron projection development"/>
    <property type="evidence" value="ECO:0000315"/>
    <property type="project" value="RGD"/>
</dbReference>
<dbReference type="GO" id="GO:0051260">
    <property type="term" value="P:protein homooligomerization"/>
    <property type="evidence" value="ECO:0000266"/>
    <property type="project" value="RGD"/>
</dbReference>
<dbReference type="GO" id="GO:0061512">
    <property type="term" value="P:protein localization to cilium"/>
    <property type="evidence" value="ECO:0000250"/>
    <property type="project" value="UniProtKB"/>
</dbReference>
<dbReference type="GO" id="GO:0072659">
    <property type="term" value="P:protein localization to plasma membrane"/>
    <property type="evidence" value="ECO:0000318"/>
    <property type="project" value="GO_Central"/>
</dbReference>
<dbReference type="CDD" id="cd00052">
    <property type="entry name" value="EH"/>
    <property type="match status" value="1"/>
</dbReference>
<dbReference type="CDD" id="cd09913">
    <property type="entry name" value="EHD"/>
    <property type="match status" value="1"/>
</dbReference>
<dbReference type="FunFam" id="3.40.50.300:FF:000147">
    <property type="entry name" value="EH domain-containing protein 1"/>
    <property type="match status" value="1"/>
</dbReference>
<dbReference type="FunFam" id="1.10.238.10:FF:000038">
    <property type="entry name" value="EH domain-containing protein 3"/>
    <property type="match status" value="1"/>
</dbReference>
<dbReference type="Gene3D" id="1.10.268.20">
    <property type="match status" value="1"/>
</dbReference>
<dbReference type="Gene3D" id="1.10.238.10">
    <property type="entry name" value="EF-hand"/>
    <property type="match status" value="1"/>
</dbReference>
<dbReference type="Gene3D" id="3.40.50.300">
    <property type="entry name" value="P-loop containing nucleotide triphosphate hydrolases"/>
    <property type="match status" value="1"/>
</dbReference>
<dbReference type="InterPro" id="IPR040990">
    <property type="entry name" value="DUF5600"/>
</dbReference>
<dbReference type="InterPro" id="IPR045063">
    <property type="entry name" value="Dynamin_N"/>
</dbReference>
<dbReference type="InterPro" id="IPR011992">
    <property type="entry name" value="EF-hand-dom_pair"/>
</dbReference>
<dbReference type="InterPro" id="IPR018247">
    <property type="entry name" value="EF_Hand_1_Ca_BS"/>
</dbReference>
<dbReference type="InterPro" id="IPR002048">
    <property type="entry name" value="EF_hand_dom"/>
</dbReference>
<dbReference type="InterPro" id="IPR000261">
    <property type="entry name" value="EH_dom"/>
</dbReference>
<dbReference type="InterPro" id="IPR031692">
    <property type="entry name" value="EHD_N"/>
</dbReference>
<dbReference type="InterPro" id="IPR030381">
    <property type="entry name" value="G_DYNAMIN_dom"/>
</dbReference>
<dbReference type="InterPro" id="IPR027417">
    <property type="entry name" value="P-loop_NTPase"/>
</dbReference>
<dbReference type="PANTHER" id="PTHR11216:SF170">
    <property type="entry name" value="DYNAMIN ASSOCIATED PROTEIN 160, ISOFORM D"/>
    <property type="match status" value="1"/>
</dbReference>
<dbReference type="PANTHER" id="PTHR11216">
    <property type="entry name" value="EH DOMAIN"/>
    <property type="match status" value="1"/>
</dbReference>
<dbReference type="Pfam" id="PF18150">
    <property type="entry name" value="DUF5600"/>
    <property type="match status" value="1"/>
</dbReference>
<dbReference type="Pfam" id="PF00350">
    <property type="entry name" value="Dynamin_N"/>
    <property type="match status" value="1"/>
</dbReference>
<dbReference type="Pfam" id="PF12763">
    <property type="entry name" value="EH"/>
    <property type="match status" value="1"/>
</dbReference>
<dbReference type="Pfam" id="PF16880">
    <property type="entry name" value="EHD_N"/>
    <property type="match status" value="1"/>
</dbReference>
<dbReference type="SMART" id="SM00027">
    <property type="entry name" value="EH"/>
    <property type="match status" value="1"/>
</dbReference>
<dbReference type="SUPFAM" id="SSF47473">
    <property type="entry name" value="EF-hand"/>
    <property type="match status" value="1"/>
</dbReference>
<dbReference type="SUPFAM" id="SSF52540">
    <property type="entry name" value="P-loop containing nucleoside triphosphate hydrolases"/>
    <property type="match status" value="1"/>
</dbReference>
<dbReference type="PROSITE" id="PS00018">
    <property type="entry name" value="EF_HAND_1"/>
    <property type="match status" value="1"/>
</dbReference>
<dbReference type="PROSITE" id="PS50222">
    <property type="entry name" value="EF_HAND_2"/>
    <property type="match status" value="1"/>
</dbReference>
<dbReference type="PROSITE" id="PS50031">
    <property type="entry name" value="EH"/>
    <property type="match status" value="1"/>
</dbReference>
<dbReference type="PROSITE" id="PS51718">
    <property type="entry name" value="G_DYNAMIN_2"/>
    <property type="match status" value="1"/>
</dbReference>
<feature type="chain" id="PRO_0000306858" description="EH domain-containing protein 1">
    <location>
        <begin position="1"/>
        <end position="534"/>
    </location>
</feature>
<feature type="domain" description="Dynamin-type G" evidence="7">
    <location>
        <begin position="55"/>
        <end position="286"/>
    </location>
</feature>
<feature type="domain" description="EH" evidence="5">
    <location>
        <begin position="444"/>
        <end position="532"/>
    </location>
</feature>
<feature type="domain" description="EF-hand" evidence="6">
    <location>
        <begin position="476"/>
        <end position="511"/>
    </location>
</feature>
<feature type="region of interest" description="G1 motif" evidence="7">
    <location>
        <begin position="65"/>
        <end position="72"/>
    </location>
</feature>
<feature type="region of interest" description="G2 motif" evidence="7">
    <location>
        <begin position="91"/>
        <end position="92"/>
    </location>
</feature>
<feature type="region of interest" description="G3 motif" evidence="7">
    <location>
        <begin position="153"/>
        <end position="156"/>
    </location>
</feature>
<feature type="region of interest" description="G4 motif" evidence="7">
    <location>
        <begin position="219"/>
        <end position="222"/>
    </location>
</feature>
<feature type="region of interest" description="G5 motif" evidence="7">
    <location>
        <position position="243"/>
    </location>
</feature>
<feature type="coiled-coil region" evidence="4">
    <location>
        <begin position="198"/>
        <end position="227"/>
    </location>
</feature>
<feature type="binding site" evidence="2">
    <location>
        <begin position="65"/>
        <end position="72"/>
    </location>
    <ligand>
        <name>ATP</name>
        <dbReference type="ChEBI" id="CHEBI:30616"/>
    </ligand>
</feature>
<feature type="binding site" evidence="1">
    <location>
        <position position="220"/>
    </location>
    <ligand>
        <name>ATP</name>
        <dbReference type="ChEBI" id="CHEBI:30616"/>
    </ligand>
</feature>
<feature type="binding site" evidence="1">
    <location>
        <position position="258"/>
    </location>
    <ligand>
        <name>ATP</name>
        <dbReference type="ChEBI" id="CHEBI:30616"/>
    </ligand>
</feature>
<feature type="binding site" evidence="6">
    <location>
        <position position="489"/>
    </location>
    <ligand>
        <name>Ca(2+)</name>
        <dbReference type="ChEBI" id="CHEBI:29108"/>
    </ligand>
</feature>
<feature type="binding site" evidence="6">
    <location>
        <position position="491"/>
    </location>
    <ligand>
        <name>Ca(2+)</name>
        <dbReference type="ChEBI" id="CHEBI:29108"/>
    </ligand>
</feature>
<feature type="binding site" evidence="6">
    <location>
        <position position="493"/>
    </location>
    <ligand>
        <name>Ca(2+)</name>
        <dbReference type="ChEBI" id="CHEBI:29108"/>
    </ligand>
</feature>
<feature type="binding site" evidence="6">
    <location>
        <position position="500"/>
    </location>
    <ligand>
        <name>Ca(2+)</name>
        <dbReference type="ChEBI" id="CHEBI:29108"/>
    </ligand>
</feature>
<feature type="modified residue" description="N-acetylmethionine" evidence="2">
    <location>
        <position position="1"/>
    </location>
</feature>
<feature type="modified residue" description="Phosphoserine" evidence="2">
    <location>
        <position position="355"/>
    </location>
</feature>
<feature type="modified residue" description="Phosphoserine" evidence="12">
    <location>
        <position position="456"/>
    </location>
</feature>
<gene>
    <name evidence="11" type="primary">Ehd1</name>
</gene>
<proteinExistence type="evidence at protein level"/>
<accession>Q641Z6</accession>
<accession>B1H289</accession>